<reference key="1">
    <citation type="journal article" date="2006" name="Proc. Natl. Acad. Sci. U.S.A.">
        <title>Molecular genetic anatomy of inter- and intraserotype variation in the human bacterial pathogen group A Streptococcus.</title>
        <authorList>
            <person name="Beres S.B."/>
            <person name="Richter E.W."/>
            <person name="Nagiec M.J."/>
            <person name="Sumby P."/>
            <person name="Porcella S.F."/>
            <person name="DeLeo F.R."/>
            <person name="Musser J.M."/>
        </authorList>
    </citation>
    <scope>NUCLEOTIDE SEQUENCE [LARGE SCALE GENOMIC DNA]</scope>
    <source>
        <strain>MGAS2096</strain>
    </source>
</reference>
<feature type="chain" id="PRO_0000264847" description="DNA repair protein RecO">
    <location>
        <begin position="1"/>
        <end position="251"/>
    </location>
</feature>
<gene>
    <name evidence="1" type="primary">recO</name>
    <name type="ordered locus">MGAS2096_Spy0020</name>
</gene>
<keyword id="KW-0227">DNA damage</keyword>
<keyword id="KW-0233">DNA recombination</keyword>
<keyword id="KW-0234">DNA repair</keyword>
<proteinExistence type="inferred from homology"/>
<sequence>MQLTESLGIVLFNRNYREDDKLVKIFTEVAGKQMFFVKHISRSKMSSIIQPLTIADFIFKLNDTGLSYVVDYSNVNTYRYINNDIFRLAYASYVLALADAAIADNESDSHLFTFLKKTLDLMEEGLDYEILTNIFEIQILDRFGISLNFHECAICHRTDLPLDFSHRFSAVLCSEHYYKDNRRNHLDPNVIYLLSRFQKITFDDLRTISLNKDIKKKLRQFIDELYHDYVGIKLKSKTFIDNLVKWGDIMK</sequence>
<accession>Q1JE86</accession>
<organism>
    <name type="scientific">Streptococcus pyogenes serotype M12 (strain MGAS2096)</name>
    <dbReference type="NCBI Taxonomy" id="370553"/>
    <lineage>
        <taxon>Bacteria</taxon>
        <taxon>Bacillati</taxon>
        <taxon>Bacillota</taxon>
        <taxon>Bacilli</taxon>
        <taxon>Lactobacillales</taxon>
        <taxon>Streptococcaceae</taxon>
        <taxon>Streptococcus</taxon>
    </lineage>
</organism>
<name>RECO_STRPB</name>
<protein>
    <recommendedName>
        <fullName evidence="1">DNA repair protein RecO</fullName>
    </recommendedName>
    <alternativeName>
        <fullName evidence="1">Recombination protein O</fullName>
    </alternativeName>
</protein>
<evidence type="ECO:0000255" key="1">
    <source>
        <dbReference type="HAMAP-Rule" id="MF_00201"/>
    </source>
</evidence>
<comment type="function">
    <text evidence="1">Involved in DNA repair and RecF pathway recombination.</text>
</comment>
<comment type="similarity">
    <text evidence="1">Belongs to the RecO family.</text>
</comment>
<dbReference type="EMBL" id="CP000261">
    <property type="protein sequence ID" value="ABF35072.1"/>
    <property type="molecule type" value="Genomic_DNA"/>
</dbReference>
<dbReference type="SMR" id="Q1JE86"/>
<dbReference type="KEGG" id="spj:MGAS2096_Spy0020"/>
<dbReference type="HOGENOM" id="CLU_066632_4_0_9"/>
<dbReference type="GO" id="GO:0043590">
    <property type="term" value="C:bacterial nucleoid"/>
    <property type="evidence" value="ECO:0007669"/>
    <property type="project" value="TreeGrafter"/>
</dbReference>
<dbReference type="GO" id="GO:0006310">
    <property type="term" value="P:DNA recombination"/>
    <property type="evidence" value="ECO:0007669"/>
    <property type="project" value="UniProtKB-UniRule"/>
</dbReference>
<dbReference type="GO" id="GO:0006302">
    <property type="term" value="P:double-strand break repair"/>
    <property type="evidence" value="ECO:0007669"/>
    <property type="project" value="TreeGrafter"/>
</dbReference>
<dbReference type="Gene3D" id="2.40.50.140">
    <property type="entry name" value="Nucleic acid-binding proteins"/>
    <property type="match status" value="1"/>
</dbReference>
<dbReference type="Gene3D" id="1.20.1440.120">
    <property type="entry name" value="Recombination protein O, C-terminal domain"/>
    <property type="match status" value="1"/>
</dbReference>
<dbReference type="HAMAP" id="MF_00201">
    <property type="entry name" value="RecO"/>
    <property type="match status" value="1"/>
</dbReference>
<dbReference type="InterPro" id="IPR037278">
    <property type="entry name" value="ARFGAP/RecO"/>
</dbReference>
<dbReference type="InterPro" id="IPR022572">
    <property type="entry name" value="DNA_rep/recomb_RecO_N"/>
</dbReference>
<dbReference type="InterPro" id="IPR012340">
    <property type="entry name" value="NA-bd_OB-fold"/>
</dbReference>
<dbReference type="InterPro" id="IPR003717">
    <property type="entry name" value="RecO"/>
</dbReference>
<dbReference type="InterPro" id="IPR042242">
    <property type="entry name" value="RecO_C"/>
</dbReference>
<dbReference type="NCBIfam" id="TIGR00613">
    <property type="entry name" value="reco"/>
    <property type="match status" value="1"/>
</dbReference>
<dbReference type="PANTHER" id="PTHR33991">
    <property type="entry name" value="DNA REPAIR PROTEIN RECO"/>
    <property type="match status" value="1"/>
</dbReference>
<dbReference type="PANTHER" id="PTHR33991:SF1">
    <property type="entry name" value="DNA REPAIR PROTEIN RECO"/>
    <property type="match status" value="1"/>
</dbReference>
<dbReference type="Pfam" id="PF02565">
    <property type="entry name" value="RecO_C"/>
    <property type="match status" value="1"/>
</dbReference>
<dbReference type="Pfam" id="PF11967">
    <property type="entry name" value="RecO_N"/>
    <property type="match status" value="1"/>
</dbReference>
<dbReference type="SUPFAM" id="SSF57863">
    <property type="entry name" value="ArfGap/RecO-like zinc finger"/>
    <property type="match status" value="1"/>
</dbReference>
<dbReference type="SUPFAM" id="SSF50249">
    <property type="entry name" value="Nucleic acid-binding proteins"/>
    <property type="match status" value="1"/>
</dbReference>